<keyword id="KW-0378">Hydrolase</keyword>
<name>GCH4_BORPD</name>
<gene>
    <name evidence="1" type="primary">folE2</name>
    <name type="ordered locus">Bpet3059</name>
</gene>
<protein>
    <recommendedName>
        <fullName evidence="1">GTP cyclohydrolase FolE2</fullName>
        <ecNumber evidence="1">3.5.4.16</ecNumber>
    </recommendedName>
</protein>
<proteinExistence type="inferred from homology"/>
<evidence type="ECO:0000255" key="1">
    <source>
        <dbReference type="HAMAP-Rule" id="MF_01527"/>
    </source>
</evidence>
<sequence>MNSPIDPALVMPDVQSSADTRHIPIQRVGIRGVRHPMLVAGADGAPQPTVANWTLTVALPAEEKGTHMSRFVALLEKYRSVPMTPALFAAMARDMLPLLHAERGDITAAFPYFINKSAPVSGVQSLLDYEVQWIARAAGDQVEFELVVQVPVTSLCPCSKAISEYGAHNQRSHVTVSVVLNGDLAMDRIIRLVEDEGSCELWGLLKRPDEKFVTERAYDNPKFVEDLVRDVAARLAAHPGVARYRVEAENFESIHNHSAYAVVEG</sequence>
<feature type="chain" id="PRO_0000372020" description="GTP cyclohydrolase FolE2">
    <location>
        <begin position="1"/>
        <end position="265"/>
    </location>
</feature>
<feature type="site" description="May be catalytically important" evidence="1">
    <location>
        <position position="156"/>
    </location>
</feature>
<comment type="function">
    <text evidence="1">Converts GTP to 7,8-dihydroneopterin triphosphate.</text>
</comment>
<comment type="catalytic activity">
    <reaction evidence="1">
        <text>GTP + H2O = 7,8-dihydroneopterin 3'-triphosphate + formate + H(+)</text>
        <dbReference type="Rhea" id="RHEA:17473"/>
        <dbReference type="ChEBI" id="CHEBI:15377"/>
        <dbReference type="ChEBI" id="CHEBI:15378"/>
        <dbReference type="ChEBI" id="CHEBI:15740"/>
        <dbReference type="ChEBI" id="CHEBI:37565"/>
        <dbReference type="ChEBI" id="CHEBI:58462"/>
        <dbReference type="EC" id="3.5.4.16"/>
    </reaction>
</comment>
<comment type="pathway">
    <text evidence="1">Cofactor biosynthesis; 7,8-dihydroneopterin triphosphate biosynthesis; 7,8-dihydroneopterin triphosphate from GTP: step 1/1.</text>
</comment>
<comment type="similarity">
    <text evidence="1">Belongs to the GTP cyclohydrolase IV family.</text>
</comment>
<accession>A9ITA7</accession>
<dbReference type="EC" id="3.5.4.16" evidence="1"/>
<dbReference type="EMBL" id="AM902716">
    <property type="protein sequence ID" value="CAP43401.1"/>
    <property type="molecule type" value="Genomic_DNA"/>
</dbReference>
<dbReference type="SMR" id="A9ITA7"/>
<dbReference type="STRING" id="94624.Bpet3059"/>
<dbReference type="KEGG" id="bpt:Bpet3059"/>
<dbReference type="eggNOG" id="COG1469">
    <property type="taxonomic scope" value="Bacteria"/>
</dbReference>
<dbReference type="UniPathway" id="UPA00848">
    <property type="reaction ID" value="UER00151"/>
</dbReference>
<dbReference type="Proteomes" id="UP000001225">
    <property type="component" value="Chromosome"/>
</dbReference>
<dbReference type="GO" id="GO:0003934">
    <property type="term" value="F:GTP cyclohydrolase I activity"/>
    <property type="evidence" value="ECO:0007669"/>
    <property type="project" value="UniProtKB-UniRule"/>
</dbReference>
<dbReference type="GO" id="GO:0046654">
    <property type="term" value="P:tetrahydrofolate biosynthetic process"/>
    <property type="evidence" value="ECO:0007669"/>
    <property type="project" value="UniProtKB-UniRule"/>
</dbReference>
<dbReference type="Gene3D" id="3.10.270.10">
    <property type="entry name" value="Urate Oxidase"/>
    <property type="match status" value="1"/>
</dbReference>
<dbReference type="HAMAP" id="MF_01527_B">
    <property type="entry name" value="GTP_cyclohydrol_B"/>
    <property type="match status" value="1"/>
</dbReference>
<dbReference type="InterPro" id="IPR022838">
    <property type="entry name" value="GTP_cyclohydrolase_FolE2"/>
</dbReference>
<dbReference type="InterPro" id="IPR003801">
    <property type="entry name" value="GTP_cyclohydrolase_FolE2/MptA"/>
</dbReference>
<dbReference type="NCBIfam" id="NF010200">
    <property type="entry name" value="PRK13674.1-1"/>
    <property type="match status" value="1"/>
</dbReference>
<dbReference type="PANTHER" id="PTHR36445">
    <property type="entry name" value="GTP CYCLOHYDROLASE MPTA"/>
    <property type="match status" value="1"/>
</dbReference>
<dbReference type="PANTHER" id="PTHR36445:SF1">
    <property type="entry name" value="GTP CYCLOHYDROLASE MPTA"/>
    <property type="match status" value="1"/>
</dbReference>
<dbReference type="Pfam" id="PF02649">
    <property type="entry name" value="GCHY-1"/>
    <property type="match status" value="1"/>
</dbReference>
<reference key="1">
    <citation type="journal article" date="2008" name="BMC Genomics">
        <title>The missing link: Bordetella petrii is endowed with both the metabolic versatility of environmental bacteria and virulence traits of pathogenic Bordetellae.</title>
        <authorList>
            <person name="Gross R."/>
            <person name="Guzman C.A."/>
            <person name="Sebaihia M."/>
            <person name="Martin dos Santos V.A.P."/>
            <person name="Pieper D.H."/>
            <person name="Koebnik R."/>
            <person name="Lechner M."/>
            <person name="Bartels D."/>
            <person name="Buhrmester J."/>
            <person name="Choudhuri J.V."/>
            <person name="Ebensen T."/>
            <person name="Gaigalat L."/>
            <person name="Herrmann S."/>
            <person name="Khachane A.N."/>
            <person name="Larisch C."/>
            <person name="Link S."/>
            <person name="Linke B."/>
            <person name="Meyer F."/>
            <person name="Mormann S."/>
            <person name="Nakunst D."/>
            <person name="Rueckert C."/>
            <person name="Schneiker-Bekel S."/>
            <person name="Schulze K."/>
            <person name="Voerholter F.-J."/>
            <person name="Yevsa T."/>
            <person name="Engle J.T."/>
            <person name="Goldman W.E."/>
            <person name="Puehler A."/>
            <person name="Goebel U.B."/>
            <person name="Goesmann A."/>
            <person name="Bloecker H."/>
            <person name="Kaiser O."/>
            <person name="Martinez-Arias R."/>
        </authorList>
    </citation>
    <scope>NUCLEOTIDE SEQUENCE [LARGE SCALE GENOMIC DNA]</scope>
    <source>
        <strain>ATCC BAA-461 / DSM 12804 / CCUG 43448</strain>
    </source>
</reference>
<organism>
    <name type="scientific">Bordetella petrii (strain ATCC BAA-461 / DSM 12804 / CCUG 43448)</name>
    <dbReference type="NCBI Taxonomy" id="340100"/>
    <lineage>
        <taxon>Bacteria</taxon>
        <taxon>Pseudomonadati</taxon>
        <taxon>Pseudomonadota</taxon>
        <taxon>Betaproteobacteria</taxon>
        <taxon>Burkholderiales</taxon>
        <taxon>Alcaligenaceae</taxon>
        <taxon>Bordetella</taxon>
    </lineage>
</organism>